<reference key="1">
    <citation type="journal article" date="2007" name="Nature">
        <title>Two chemosensory receptors together mediate carbon dioxide detection in Drosophila.</title>
        <authorList>
            <person name="Jones W.D."/>
            <person name="Cayirlioglu P."/>
            <person name="Grunwald Kadow I."/>
            <person name="Vosshall L.B."/>
        </authorList>
    </citation>
    <scope>NUCLEOTIDE SEQUENCE [MRNA]</scope>
    <scope>FUNCTION</scope>
    <scope>TISSUE SPECIFICITY</scope>
    <source>
        <strain>Oregon-R</strain>
        <tissue>Antenna</tissue>
    </source>
</reference>
<reference key="2">
    <citation type="journal article" date="2000" name="Science">
        <title>The genome sequence of Drosophila melanogaster.</title>
        <authorList>
            <person name="Adams M.D."/>
            <person name="Celniker S.E."/>
            <person name="Holt R.A."/>
            <person name="Evans C.A."/>
            <person name="Gocayne J.D."/>
            <person name="Amanatides P.G."/>
            <person name="Scherer S.E."/>
            <person name="Li P.W."/>
            <person name="Hoskins R.A."/>
            <person name="Galle R.F."/>
            <person name="George R.A."/>
            <person name="Lewis S.E."/>
            <person name="Richards S."/>
            <person name="Ashburner M."/>
            <person name="Henderson S.N."/>
            <person name="Sutton G.G."/>
            <person name="Wortman J.R."/>
            <person name="Yandell M.D."/>
            <person name="Zhang Q."/>
            <person name="Chen L.X."/>
            <person name="Brandon R.C."/>
            <person name="Rogers Y.-H.C."/>
            <person name="Blazej R.G."/>
            <person name="Champe M."/>
            <person name="Pfeiffer B.D."/>
            <person name="Wan K.H."/>
            <person name="Doyle C."/>
            <person name="Baxter E.G."/>
            <person name="Helt G."/>
            <person name="Nelson C.R."/>
            <person name="Miklos G.L.G."/>
            <person name="Abril J.F."/>
            <person name="Agbayani A."/>
            <person name="An H.-J."/>
            <person name="Andrews-Pfannkoch C."/>
            <person name="Baldwin D."/>
            <person name="Ballew R.M."/>
            <person name="Basu A."/>
            <person name="Baxendale J."/>
            <person name="Bayraktaroglu L."/>
            <person name="Beasley E.M."/>
            <person name="Beeson K.Y."/>
            <person name="Benos P.V."/>
            <person name="Berman B.P."/>
            <person name="Bhandari D."/>
            <person name="Bolshakov S."/>
            <person name="Borkova D."/>
            <person name="Botchan M.R."/>
            <person name="Bouck J."/>
            <person name="Brokstein P."/>
            <person name="Brottier P."/>
            <person name="Burtis K.C."/>
            <person name="Busam D.A."/>
            <person name="Butler H."/>
            <person name="Cadieu E."/>
            <person name="Center A."/>
            <person name="Chandra I."/>
            <person name="Cherry J.M."/>
            <person name="Cawley S."/>
            <person name="Dahlke C."/>
            <person name="Davenport L.B."/>
            <person name="Davies P."/>
            <person name="de Pablos B."/>
            <person name="Delcher A."/>
            <person name="Deng Z."/>
            <person name="Mays A.D."/>
            <person name="Dew I."/>
            <person name="Dietz S.M."/>
            <person name="Dodson K."/>
            <person name="Doup L.E."/>
            <person name="Downes M."/>
            <person name="Dugan-Rocha S."/>
            <person name="Dunkov B.C."/>
            <person name="Dunn P."/>
            <person name="Durbin K.J."/>
            <person name="Evangelista C.C."/>
            <person name="Ferraz C."/>
            <person name="Ferriera S."/>
            <person name="Fleischmann W."/>
            <person name="Fosler C."/>
            <person name="Gabrielian A.E."/>
            <person name="Garg N.S."/>
            <person name="Gelbart W.M."/>
            <person name="Glasser K."/>
            <person name="Glodek A."/>
            <person name="Gong F."/>
            <person name="Gorrell J.H."/>
            <person name="Gu Z."/>
            <person name="Guan P."/>
            <person name="Harris M."/>
            <person name="Harris N.L."/>
            <person name="Harvey D.A."/>
            <person name="Heiman T.J."/>
            <person name="Hernandez J.R."/>
            <person name="Houck J."/>
            <person name="Hostin D."/>
            <person name="Houston K.A."/>
            <person name="Howland T.J."/>
            <person name="Wei M.-H."/>
            <person name="Ibegwam C."/>
            <person name="Jalali M."/>
            <person name="Kalush F."/>
            <person name="Karpen G.H."/>
            <person name="Ke Z."/>
            <person name="Kennison J.A."/>
            <person name="Ketchum K.A."/>
            <person name="Kimmel B.E."/>
            <person name="Kodira C.D."/>
            <person name="Kraft C.L."/>
            <person name="Kravitz S."/>
            <person name="Kulp D."/>
            <person name="Lai Z."/>
            <person name="Lasko P."/>
            <person name="Lei Y."/>
            <person name="Levitsky A.A."/>
            <person name="Li J.H."/>
            <person name="Li Z."/>
            <person name="Liang Y."/>
            <person name="Lin X."/>
            <person name="Liu X."/>
            <person name="Mattei B."/>
            <person name="McIntosh T.C."/>
            <person name="McLeod M.P."/>
            <person name="McPherson D."/>
            <person name="Merkulov G."/>
            <person name="Milshina N.V."/>
            <person name="Mobarry C."/>
            <person name="Morris J."/>
            <person name="Moshrefi A."/>
            <person name="Mount S.M."/>
            <person name="Moy M."/>
            <person name="Murphy B."/>
            <person name="Murphy L."/>
            <person name="Muzny D.M."/>
            <person name="Nelson D.L."/>
            <person name="Nelson D.R."/>
            <person name="Nelson K.A."/>
            <person name="Nixon K."/>
            <person name="Nusskern D.R."/>
            <person name="Pacleb J.M."/>
            <person name="Palazzolo M."/>
            <person name="Pittman G.S."/>
            <person name="Pan S."/>
            <person name="Pollard J."/>
            <person name="Puri V."/>
            <person name="Reese M.G."/>
            <person name="Reinert K."/>
            <person name="Remington K."/>
            <person name="Saunders R.D.C."/>
            <person name="Scheeler F."/>
            <person name="Shen H."/>
            <person name="Shue B.C."/>
            <person name="Siden-Kiamos I."/>
            <person name="Simpson M."/>
            <person name="Skupski M.P."/>
            <person name="Smith T.J."/>
            <person name="Spier E."/>
            <person name="Spradling A.C."/>
            <person name="Stapleton M."/>
            <person name="Strong R."/>
            <person name="Sun E."/>
            <person name="Svirskas R."/>
            <person name="Tector C."/>
            <person name="Turner R."/>
            <person name="Venter E."/>
            <person name="Wang A.H."/>
            <person name="Wang X."/>
            <person name="Wang Z.-Y."/>
            <person name="Wassarman D.A."/>
            <person name="Weinstock G.M."/>
            <person name="Weissenbach J."/>
            <person name="Williams S.M."/>
            <person name="Woodage T."/>
            <person name="Worley K.C."/>
            <person name="Wu D."/>
            <person name="Yang S."/>
            <person name="Yao Q.A."/>
            <person name="Ye J."/>
            <person name="Yeh R.-F."/>
            <person name="Zaveri J.S."/>
            <person name="Zhan M."/>
            <person name="Zhang G."/>
            <person name="Zhao Q."/>
            <person name="Zheng L."/>
            <person name="Zheng X.H."/>
            <person name="Zhong F.N."/>
            <person name="Zhong W."/>
            <person name="Zhou X."/>
            <person name="Zhu S.C."/>
            <person name="Zhu X."/>
            <person name="Smith H.O."/>
            <person name="Gibbs R.A."/>
            <person name="Myers E.W."/>
            <person name="Rubin G.M."/>
            <person name="Venter J.C."/>
        </authorList>
    </citation>
    <scope>NUCLEOTIDE SEQUENCE [LARGE SCALE GENOMIC DNA]</scope>
    <source>
        <strain>Berkeley</strain>
    </source>
</reference>
<reference key="3">
    <citation type="journal article" date="2002" name="Genome Biol.">
        <title>Annotation of the Drosophila melanogaster euchromatic genome: a systematic review.</title>
        <authorList>
            <person name="Misra S."/>
            <person name="Crosby M.A."/>
            <person name="Mungall C.J."/>
            <person name="Matthews B.B."/>
            <person name="Campbell K.S."/>
            <person name="Hradecky P."/>
            <person name="Huang Y."/>
            <person name="Kaminker J.S."/>
            <person name="Millburn G.H."/>
            <person name="Prochnik S.E."/>
            <person name="Smith C.D."/>
            <person name="Tupy J.L."/>
            <person name="Whitfield E.J."/>
            <person name="Bayraktaroglu L."/>
            <person name="Berman B.P."/>
            <person name="Bettencourt B.R."/>
            <person name="Celniker S.E."/>
            <person name="de Grey A.D.N.J."/>
            <person name="Drysdale R.A."/>
            <person name="Harris N.L."/>
            <person name="Richter J."/>
            <person name="Russo S."/>
            <person name="Schroeder A.J."/>
            <person name="Shu S.Q."/>
            <person name="Stapleton M."/>
            <person name="Yamada C."/>
            <person name="Ashburner M."/>
            <person name="Gelbart W.M."/>
            <person name="Rubin G.M."/>
            <person name="Lewis S.E."/>
        </authorList>
    </citation>
    <scope>GENOME REANNOTATION</scope>
    <source>
        <strain>Berkeley</strain>
    </source>
</reference>
<reference key="4">
    <citation type="submission" date="2006-03" db="EMBL/GenBank/DDBJ databases">
        <authorList>
            <person name="Stapleton M."/>
            <person name="Carlson J.W."/>
            <person name="Chavez C."/>
            <person name="Frise E."/>
            <person name="George R.A."/>
            <person name="Pacleb J.M."/>
            <person name="Park S."/>
            <person name="Wan K.H."/>
            <person name="Yu C."/>
            <person name="Celniker S.E."/>
        </authorList>
    </citation>
    <scope>NUCLEOTIDE SEQUENCE [LARGE SCALE MRNA]</scope>
    <source>
        <strain>Berkeley</strain>
    </source>
</reference>
<reference key="5">
    <citation type="journal article" date="2000" name="Science">
        <title>Candidate taste receptors in Drosophila.</title>
        <authorList>
            <person name="Clyne P.J."/>
            <person name="Warr C.G."/>
            <person name="Carlson J.R."/>
        </authorList>
    </citation>
    <scope>IDENTIFICATION</scope>
    <scope>TISSUE SPECIFICITY</scope>
</reference>
<reference key="6">
    <citation type="journal article" date="2001" name="Curr. Biol.">
        <title>Spatially restricted expression of candidate taste receptors in the Drosophila gustatory system.</title>
        <authorList>
            <person name="Dunipace L."/>
            <person name="Meister S."/>
            <person name="McNealy C."/>
            <person name="Amrein H."/>
        </authorList>
    </citation>
    <scope>IDENTIFICATION</scope>
</reference>
<reference key="7">
    <citation type="journal article" date="2006" name="J. Exp. Biol.">
        <title>Behavioral responses of Drosophila to biogenic levels of carbon dioxide depend on life-stage, sex and olfactory context.</title>
        <authorList>
            <person name="Faucher C."/>
            <person name="Forstreuter M."/>
            <person name="Hilker M."/>
            <person name="de Bruyne M."/>
        </authorList>
    </citation>
    <scope>TISSUE SPECIFICITY</scope>
    <scope>FUNCTION</scope>
    <scope>DISRUPTION PHENOTYPE</scope>
</reference>
<reference key="8">
    <citation type="journal article" date="2007" name="Curr. Biol.">
        <title>Light activation of an innate olfactory avoidance response in Drosophila.</title>
        <authorList>
            <person name="Suh G.S."/>
            <person name="Ben-Tabou de Leon S."/>
            <person name="Tanimoto H."/>
            <person name="Fiala A."/>
            <person name="Benzer S."/>
            <person name="Anderson D.J."/>
        </authorList>
    </citation>
    <scope>FUNCTION</scope>
</reference>
<reference key="9">
    <citation type="journal article" date="2007" name="Proc. Natl. Acad. Sci. U.S.A.">
        <title>The molecular basis of CO2 reception in Drosophila.</title>
        <authorList>
            <person name="Kwon J.Y."/>
            <person name="Dahanukar A."/>
            <person name="Weiss L.A."/>
            <person name="Carlson J.R."/>
        </authorList>
    </citation>
    <scope>FUNCTION</scope>
    <scope>SUBUNIT</scope>
</reference>
<reference key="10">
    <citation type="journal article" date="2009" name="Nature">
        <title>Modification of CO2 avoidance behaviour in Drosophila by inhibitory odorants.</title>
        <authorList>
            <person name="Turner S.L."/>
            <person name="Ray A."/>
        </authorList>
    </citation>
    <scope>FUNCTION</scope>
</reference>
<reference key="11">
    <citation type="journal article" date="2011" name="J. Neurosci.">
        <title>Molecular and cellular organization of the taste system in the Drosophila larva.</title>
        <authorList>
            <person name="Kwon J.Y."/>
            <person name="Dahanukar A."/>
            <person name="Weiss L.A."/>
            <person name="Carlson J.R."/>
        </authorList>
    </citation>
    <scope>TISSUE SPECIFICITY</scope>
</reference>
<reference key="12">
    <citation type="journal article" date="2012" name="Front. Cell. Neurosci.">
        <title>Temporal response dynamics of Drosophila olfactory sensory neurons depends on receptor type and response polarity.</title>
        <authorList>
            <person name="Getahun M.N."/>
            <person name="Wicher D."/>
            <person name="Hansson B.S."/>
            <person name="Olsson S.B."/>
        </authorList>
    </citation>
    <scope>FUNCTION</scope>
</reference>
<reference key="13">
    <citation type="journal article" date="2012" name="Genes Dev.">
        <title>Epigenetic regulation of olfactory receptor gene expression by the Myb-MuvB/dREAM complex.</title>
        <authorList>
            <person name="Sim C.K."/>
            <person name="Perry S."/>
            <person name="Tharadra S.K."/>
            <person name="Lipsick J.S."/>
            <person name="Ray A."/>
        </authorList>
    </citation>
    <scope>INDUCTION</scope>
</reference>
<reference key="14">
    <citation type="journal article" date="2012" name="PLoS ONE">
        <title>Mutants in Drosophila TRPC channels reduce olfactory sensitivity to carbon dioxide.</title>
        <authorList>
            <person name="Badsha F."/>
            <person name="Kain P."/>
            <person name="Prabhakar S."/>
            <person name="Sundaram S."/>
            <person name="Padinjat R."/>
            <person name="Rodrigues V."/>
            <person name="Hasan G."/>
        </authorList>
    </citation>
    <scope>FUNCTION</scope>
</reference>
<protein>
    <recommendedName>
        <fullName>Gustatory and odorant receptor 21a</fullName>
    </recommendedName>
</protein>
<comment type="function">
    <text evidence="4 5 6 7 8 11 12">Gustatory and odorant receptor which mediates acceptance or avoidance behavior, depending on its substrates. Gr21a and Gr63a together are sufficient for carbon dioxide detection and avoidance behavior. It is possible that the CO(2) receptors Gr63a and Gr21a activate the TRPC channels through Galpha49B and Plc21C. This innate olfactory avoidance behavior can be inhibited by inhibitory interactions of the odors such as 1-hexanol and 2,3-butanedione with Gr21a and Gr63a.</text>
</comment>
<comment type="subunit">
    <text evidence="6">Gr21a and Gr63a probably form a heterodimer that responds to CO(2).</text>
</comment>
<comment type="subcellular location">
    <subcellularLocation>
        <location evidence="1">Cell membrane</location>
        <topology evidence="1">Multi-pass membrane protein</topology>
    </subcellularLocation>
</comment>
<comment type="tissue specificity">
    <text evidence="3 4 5 9">Expressed in the adult labellar chemosensory neurons. Carbon dioxide-responsive neurons coexpress Gr21a and Gr63a in a pair of chemosensory receptors at both larval and adult life stages. A single bilateral neuron, expressing the Gr21a receptor, is responsible for CO(2) detection in larvae.</text>
</comment>
<comment type="induction">
    <text evidence="10">The Myb-MuvB complex mediates neuron-specific expression of the carbon dioxide receptor genes Gr63a and Gr21a.</text>
</comment>
<comment type="disruption phenotype">
    <text evidence="4">Impairs CO(2) avoidance of larvae.</text>
</comment>
<comment type="similarity">
    <text evidence="13">Belongs to the insect chemoreceptor superfamily. Gustatory receptor (GR) family. Gr21a subfamily.</text>
</comment>
<comment type="sequence caution" evidence="13">
    <conflict type="erroneous gene model prediction">
        <sequence resource="EMBL-CDS" id="AAF51461"/>
    </conflict>
</comment>
<comment type="sequence caution" evidence="13">
    <conflict type="erroneous initiation">
        <sequence resource="EMBL-CDS" id="ABE01237"/>
    </conflict>
    <text>Truncated N-terminus.</text>
</comment>
<comment type="sequence caution" evidence="13">
    <conflict type="frameshift">
        <sequence resource="EMBL-CDS" id="ABE01237"/>
    </conflict>
</comment>
<evidence type="ECO:0000250" key="1"/>
<evidence type="ECO:0000255" key="2"/>
<evidence type="ECO:0000269" key="3">
    <source>
    </source>
</evidence>
<evidence type="ECO:0000269" key="4">
    <source>
    </source>
</evidence>
<evidence type="ECO:0000269" key="5">
    <source>
    </source>
</evidence>
<evidence type="ECO:0000269" key="6">
    <source>
    </source>
</evidence>
<evidence type="ECO:0000269" key="7">
    <source>
    </source>
</evidence>
<evidence type="ECO:0000269" key="8">
    <source>
    </source>
</evidence>
<evidence type="ECO:0000269" key="9">
    <source>
    </source>
</evidence>
<evidence type="ECO:0000269" key="10">
    <source>
    </source>
</evidence>
<evidence type="ECO:0000269" key="11">
    <source>
    </source>
</evidence>
<evidence type="ECO:0000269" key="12">
    <source>
    </source>
</evidence>
<evidence type="ECO:0000305" key="13"/>
<gene>
    <name type="primary">Gr21a</name>
    <name type="synonym">GR21D.1</name>
    <name type="ORF">CG13948</name>
</gene>
<sequence>MTFLDRTMSFWAVSRGLTPPSKVVPMLNPNQRQFLEDEVRYREKLKLMARGDAMEEVYVRKQETVDDPLELDKHDSFYQTTKSLLVLFQIMGVMPIHRNPPEKNLPRTGYSWGSKQVMWAIFIYSCQTTIVVLVLRERVKKFVTSPDKRFDEAIYNVIFISLLFTNFLLPVASWRHGPQVAIFKNMWTNYQYKFFKTTGSPIVFPNLYPLTWSLCVFSWLLSIAINLSQYFLQPDFRLWYTFAYYPIIAMLNCFCSLWYINCNAFGTASRALSDALQTTIRGEKPAQKLTEYRHLWVDLSHMMQQLGRAYSNMYGMYCLVIFFTTIIATYGSISEIIDHGATYKEVGLFVIVFYCMGLLYIICNEAHYASRKVGLDFQTKLLNINLTAVDAATQKEVEMLLVAINKNPPIMNLDGYANINRELITTNISFMATYLVVLLQFKITEQRRIGQQQA</sequence>
<accession>Q9VPT1</accession>
<accession>A1C3L0</accession>
<accession>Q1WW99</accession>
<feature type="chain" id="PRO_0000216492" description="Gustatory and odorant receptor 21a">
    <location>
        <begin position="1"/>
        <end position="454"/>
    </location>
</feature>
<feature type="topological domain" description="Cytoplasmic" evidence="1">
    <location>
        <begin position="1"/>
        <end position="114"/>
    </location>
</feature>
<feature type="transmembrane region" description="Helical; Name=1" evidence="2">
    <location>
        <begin position="115"/>
        <end position="135"/>
    </location>
</feature>
<feature type="topological domain" description="Extracellular" evidence="1">
    <location>
        <begin position="136"/>
        <end position="153"/>
    </location>
</feature>
<feature type="transmembrane region" description="Helical; Name=2" evidence="2">
    <location>
        <begin position="154"/>
        <end position="174"/>
    </location>
</feature>
<feature type="topological domain" description="Cytoplasmic" evidence="1">
    <location>
        <begin position="175"/>
        <end position="206"/>
    </location>
</feature>
<feature type="transmembrane region" description="Helical; Name=3" evidence="2">
    <location>
        <begin position="207"/>
        <end position="227"/>
    </location>
</feature>
<feature type="topological domain" description="Extracellular" evidence="1">
    <location>
        <begin position="228"/>
        <end position="237"/>
    </location>
</feature>
<feature type="transmembrane region" description="Helical; Name=4" evidence="2">
    <location>
        <begin position="238"/>
        <end position="258"/>
    </location>
</feature>
<feature type="topological domain" description="Cytoplasmic" evidence="1">
    <location>
        <begin position="259"/>
        <end position="312"/>
    </location>
</feature>
<feature type="transmembrane region" description="Helical; Name=5" evidence="2">
    <location>
        <begin position="313"/>
        <end position="333"/>
    </location>
</feature>
<feature type="topological domain" description="Extracellular" evidence="1">
    <location>
        <begin position="334"/>
        <end position="345"/>
    </location>
</feature>
<feature type="transmembrane region" description="Helical; Name=6" evidence="2">
    <location>
        <begin position="346"/>
        <end position="366"/>
    </location>
</feature>
<feature type="topological domain" description="Cytoplasmic" evidence="1">
    <location>
        <begin position="367"/>
        <end position="422"/>
    </location>
</feature>
<feature type="transmembrane region" description="Helical; Name=7" evidence="2">
    <location>
        <begin position="423"/>
        <end position="443"/>
    </location>
</feature>
<feature type="topological domain" description="Extracellular" evidence="1">
    <location>
        <begin position="444"/>
        <end position="454"/>
    </location>
</feature>
<keyword id="KW-0085">Behavior</keyword>
<keyword id="KW-1003">Cell membrane</keyword>
<keyword id="KW-0472">Membrane</keyword>
<keyword id="KW-0552">Olfaction</keyword>
<keyword id="KW-0675">Receptor</keyword>
<keyword id="KW-1185">Reference proteome</keyword>
<keyword id="KW-0716">Sensory transduction</keyword>
<keyword id="KW-0807">Transducer</keyword>
<keyword id="KW-0812">Transmembrane</keyword>
<keyword id="KW-1133">Transmembrane helix</keyword>
<dbReference type="EMBL" id="DQ989014">
    <property type="protein sequence ID" value="ABK97615.1"/>
    <property type="molecule type" value="Genomic_DNA"/>
</dbReference>
<dbReference type="EMBL" id="AE014134">
    <property type="protein sequence ID" value="AAF51461.2"/>
    <property type="status" value="ALT_SEQ"/>
    <property type="molecule type" value="Genomic_DNA"/>
</dbReference>
<dbReference type="EMBL" id="BT025007">
    <property type="protein sequence ID" value="ABE01237.1"/>
    <property type="status" value="ALT_SEQ"/>
    <property type="molecule type" value="mRNA"/>
</dbReference>
<dbReference type="RefSeq" id="NP_001259841.1">
    <property type="nucleotide sequence ID" value="NM_001272912.1"/>
</dbReference>
<dbReference type="RefSeq" id="NP_523448.2">
    <property type="nucleotide sequence ID" value="NM_078724.6"/>
</dbReference>
<dbReference type="SMR" id="Q9VPT1"/>
<dbReference type="BioGRID" id="59505">
    <property type="interactions" value="1"/>
</dbReference>
<dbReference type="FunCoup" id="Q9VPT1">
    <property type="interactions" value="18"/>
</dbReference>
<dbReference type="STRING" id="7227.FBpp0077671"/>
<dbReference type="TCDB" id="1.A.69.2.1">
    <property type="family name" value="the heteromeric odorant receptor channel (horc) family"/>
</dbReference>
<dbReference type="PaxDb" id="7227-FBpp0077671"/>
<dbReference type="EnsemblMetazoa" id="FBtr0331651">
    <property type="protein sequence ID" value="FBpp0304041"/>
    <property type="gene ID" value="FBgn0041250"/>
</dbReference>
<dbReference type="GeneID" id="33251"/>
<dbReference type="KEGG" id="dme:Dmel_CG13948"/>
<dbReference type="AGR" id="FB:FBgn0041250"/>
<dbReference type="CTD" id="33251"/>
<dbReference type="FlyBase" id="FBgn0041250">
    <property type="gene designation" value="Gr21a"/>
</dbReference>
<dbReference type="VEuPathDB" id="VectorBase:FBgn0041250"/>
<dbReference type="eggNOG" id="ENOG502R7M7">
    <property type="taxonomic scope" value="Eukaryota"/>
</dbReference>
<dbReference type="GeneTree" id="ENSGT00530000064835"/>
<dbReference type="HOGENOM" id="CLU_049090_0_0_1"/>
<dbReference type="InParanoid" id="Q9VPT1"/>
<dbReference type="OrthoDB" id="6625921at2759"/>
<dbReference type="PhylomeDB" id="Q9VPT1"/>
<dbReference type="BioGRID-ORCS" id="33251">
    <property type="hits" value="0 hits in 1 CRISPR screen"/>
</dbReference>
<dbReference type="GenomeRNAi" id="33251"/>
<dbReference type="PRO" id="PR:Q9VPT1"/>
<dbReference type="Proteomes" id="UP000000803">
    <property type="component" value="Chromosome 2L"/>
</dbReference>
<dbReference type="Bgee" id="FBgn0041250">
    <property type="expression patterns" value="Expressed in adult olfactory receptor neuron Gr21a/63a (Drosophila) in antenna and 4 other cell types or tissues"/>
</dbReference>
<dbReference type="ExpressionAtlas" id="Q9VPT1">
    <property type="expression patterns" value="baseline and differential"/>
</dbReference>
<dbReference type="GO" id="GO:0030424">
    <property type="term" value="C:axon"/>
    <property type="evidence" value="ECO:0000318"/>
    <property type="project" value="GO_Central"/>
</dbReference>
<dbReference type="GO" id="GO:0030425">
    <property type="term" value="C:dendrite"/>
    <property type="evidence" value="ECO:0000314"/>
    <property type="project" value="FlyBase"/>
</dbReference>
<dbReference type="GO" id="GO:0016020">
    <property type="term" value="C:membrane"/>
    <property type="evidence" value="ECO:0000303"/>
    <property type="project" value="UniProtKB"/>
</dbReference>
<dbReference type="GO" id="GO:0043025">
    <property type="term" value="C:neuronal cell body"/>
    <property type="evidence" value="ECO:0000314"/>
    <property type="project" value="FlyBase"/>
</dbReference>
<dbReference type="GO" id="GO:0005886">
    <property type="term" value="C:plasma membrane"/>
    <property type="evidence" value="ECO:0000250"/>
    <property type="project" value="FlyBase"/>
</dbReference>
<dbReference type="GO" id="GO:0015276">
    <property type="term" value="F:ligand-gated monoatomic ion channel activity"/>
    <property type="evidence" value="ECO:0000250"/>
    <property type="project" value="FlyBase"/>
</dbReference>
<dbReference type="GO" id="GO:0004984">
    <property type="term" value="F:olfactory receptor activity"/>
    <property type="evidence" value="ECO:0000318"/>
    <property type="project" value="GO_Central"/>
</dbReference>
<dbReference type="GO" id="GO:0008527">
    <property type="term" value="F:taste receptor activity"/>
    <property type="evidence" value="ECO:0000303"/>
    <property type="project" value="UniProtKB"/>
</dbReference>
<dbReference type="GO" id="GO:0003031">
    <property type="term" value="P:detection of carbon dioxide"/>
    <property type="evidence" value="ECO:0000316"/>
    <property type="project" value="FlyBase"/>
</dbReference>
<dbReference type="GO" id="GO:0034220">
    <property type="term" value="P:monoatomic ion transmembrane transport"/>
    <property type="evidence" value="ECO:0000250"/>
    <property type="project" value="FlyBase"/>
</dbReference>
<dbReference type="GO" id="GO:0010037">
    <property type="term" value="P:response to carbon dioxide"/>
    <property type="evidence" value="ECO:0000316"/>
    <property type="project" value="FlyBase"/>
</dbReference>
<dbReference type="GO" id="GO:0050909">
    <property type="term" value="P:sensory perception of taste"/>
    <property type="evidence" value="ECO:0000303"/>
    <property type="project" value="UniProtKB"/>
</dbReference>
<dbReference type="GO" id="GO:0007165">
    <property type="term" value="P:signal transduction"/>
    <property type="evidence" value="ECO:0007669"/>
    <property type="project" value="UniProtKB-KW"/>
</dbReference>
<dbReference type="InterPro" id="IPR013604">
    <property type="entry name" value="7TM_chemorcpt"/>
</dbReference>
<dbReference type="PANTHER" id="PTHR21143:SF121">
    <property type="entry name" value="GUSTATORY AND ODORANT RECEPTOR 21A"/>
    <property type="match status" value="1"/>
</dbReference>
<dbReference type="PANTHER" id="PTHR21143">
    <property type="entry name" value="INVERTEBRATE GUSTATORY RECEPTOR"/>
    <property type="match status" value="1"/>
</dbReference>
<dbReference type="Pfam" id="PF08395">
    <property type="entry name" value="7tm_7"/>
    <property type="match status" value="1"/>
</dbReference>
<organism>
    <name type="scientific">Drosophila melanogaster</name>
    <name type="common">Fruit fly</name>
    <dbReference type="NCBI Taxonomy" id="7227"/>
    <lineage>
        <taxon>Eukaryota</taxon>
        <taxon>Metazoa</taxon>
        <taxon>Ecdysozoa</taxon>
        <taxon>Arthropoda</taxon>
        <taxon>Hexapoda</taxon>
        <taxon>Insecta</taxon>
        <taxon>Pterygota</taxon>
        <taxon>Neoptera</taxon>
        <taxon>Endopterygota</taxon>
        <taxon>Diptera</taxon>
        <taxon>Brachycera</taxon>
        <taxon>Muscomorpha</taxon>
        <taxon>Ephydroidea</taxon>
        <taxon>Drosophilidae</taxon>
        <taxon>Drosophila</taxon>
        <taxon>Sophophora</taxon>
    </lineage>
</organism>
<proteinExistence type="evidence at protein level"/>
<name>GR21A_DROME</name>